<evidence type="ECO:0000255" key="1">
    <source>
        <dbReference type="HAMAP-Rule" id="MF_00161"/>
    </source>
</evidence>
<keyword id="KW-0064">Aspartyl protease</keyword>
<keyword id="KW-0997">Cell inner membrane</keyword>
<keyword id="KW-1003">Cell membrane</keyword>
<keyword id="KW-0378">Hydrolase</keyword>
<keyword id="KW-0472">Membrane</keyword>
<keyword id="KW-0645">Protease</keyword>
<keyword id="KW-0812">Transmembrane</keyword>
<keyword id="KW-1133">Transmembrane helix</keyword>
<dbReference type="EC" id="3.4.23.36" evidence="1"/>
<dbReference type="EMBL" id="CP000946">
    <property type="protein sequence ID" value="ACA79241.1"/>
    <property type="molecule type" value="Genomic_DNA"/>
</dbReference>
<dbReference type="RefSeq" id="WP_000083369.1">
    <property type="nucleotide sequence ID" value="NZ_MTFT01000035.1"/>
</dbReference>
<dbReference type="SMR" id="B1IRE8"/>
<dbReference type="MEROPS" id="A08.001"/>
<dbReference type="GeneID" id="75169926"/>
<dbReference type="KEGG" id="ecl:EcolC_3628"/>
<dbReference type="HOGENOM" id="CLU_083252_4_0_6"/>
<dbReference type="UniPathway" id="UPA00665"/>
<dbReference type="GO" id="GO:0005886">
    <property type="term" value="C:plasma membrane"/>
    <property type="evidence" value="ECO:0007669"/>
    <property type="project" value="UniProtKB-SubCell"/>
</dbReference>
<dbReference type="GO" id="GO:0004190">
    <property type="term" value="F:aspartic-type endopeptidase activity"/>
    <property type="evidence" value="ECO:0007669"/>
    <property type="project" value="UniProtKB-UniRule"/>
</dbReference>
<dbReference type="GO" id="GO:0006508">
    <property type="term" value="P:proteolysis"/>
    <property type="evidence" value="ECO:0007669"/>
    <property type="project" value="UniProtKB-KW"/>
</dbReference>
<dbReference type="HAMAP" id="MF_00161">
    <property type="entry name" value="LspA"/>
    <property type="match status" value="1"/>
</dbReference>
<dbReference type="InterPro" id="IPR001872">
    <property type="entry name" value="Peptidase_A8"/>
</dbReference>
<dbReference type="NCBIfam" id="TIGR00077">
    <property type="entry name" value="lspA"/>
    <property type="match status" value="1"/>
</dbReference>
<dbReference type="PANTHER" id="PTHR33695">
    <property type="entry name" value="LIPOPROTEIN SIGNAL PEPTIDASE"/>
    <property type="match status" value="1"/>
</dbReference>
<dbReference type="PANTHER" id="PTHR33695:SF1">
    <property type="entry name" value="LIPOPROTEIN SIGNAL PEPTIDASE"/>
    <property type="match status" value="1"/>
</dbReference>
<dbReference type="Pfam" id="PF01252">
    <property type="entry name" value="Peptidase_A8"/>
    <property type="match status" value="1"/>
</dbReference>
<dbReference type="PRINTS" id="PR00781">
    <property type="entry name" value="LIPOSIGPTASE"/>
</dbReference>
<dbReference type="PROSITE" id="PS00855">
    <property type="entry name" value="SPASE_II"/>
    <property type="match status" value="1"/>
</dbReference>
<accession>B1IRE8</accession>
<sequence>MSQSICSTGLRWLWLVVVVLIIDLGSKYLILQNFALGDTVPLFPSLNLHYARNYGAAFSFLADSGGWQRWFFAGIAIGISVILAVMMYRSKATQKLNNIAYALIIGGALGNLFDRLWHGFVVDMIDFYVGDWHFATFNLADTAICVGAALIVLEGFLPSKAKKQ</sequence>
<proteinExistence type="inferred from homology"/>
<feature type="chain" id="PRO_1000076924" description="Lipoprotein signal peptidase">
    <location>
        <begin position="1"/>
        <end position="164"/>
    </location>
</feature>
<feature type="transmembrane region" description="Helical" evidence="1">
    <location>
        <begin position="12"/>
        <end position="32"/>
    </location>
</feature>
<feature type="transmembrane region" description="Helical" evidence="1">
    <location>
        <begin position="70"/>
        <end position="90"/>
    </location>
</feature>
<feature type="transmembrane region" description="Helical" evidence="1">
    <location>
        <begin position="102"/>
        <end position="122"/>
    </location>
</feature>
<feature type="transmembrane region" description="Helical" evidence="1">
    <location>
        <begin position="137"/>
        <end position="157"/>
    </location>
</feature>
<feature type="active site" evidence="1">
    <location>
        <position position="123"/>
    </location>
</feature>
<feature type="active site" evidence="1">
    <location>
        <position position="141"/>
    </location>
</feature>
<gene>
    <name evidence="1" type="primary">lspA</name>
    <name type="ordered locus">EcolC_3628</name>
</gene>
<comment type="function">
    <text evidence="1">This protein specifically catalyzes the removal of signal peptides from prolipoproteins.</text>
</comment>
<comment type="catalytic activity">
    <reaction evidence="1">
        <text>Release of signal peptides from bacterial membrane prolipoproteins. Hydrolyzes -Xaa-Yaa-Zaa-|-(S,diacylglyceryl)Cys-, in which Xaa is hydrophobic (preferably Leu), and Yaa (Ala or Ser) and Zaa (Gly or Ala) have small, neutral side chains.</text>
        <dbReference type="EC" id="3.4.23.36"/>
    </reaction>
</comment>
<comment type="pathway">
    <text evidence="1">Protein modification; lipoprotein biosynthesis (signal peptide cleavage).</text>
</comment>
<comment type="subcellular location">
    <subcellularLocation>
        <location evidence="1">Cell inner membrane</location>
        <topology evidence="1">Multi-pass membrane protein</topology>
    </subcellularLocation>
</comment>
<comment type="similarity">
    <text evidence="1">Belongs to the peptidase A8 family.</text>
</comment>
<reference key="1">
    <citation type="submission" date="2008-02" db="EMBL/GenBank/DDBJ databases">
        <title>Complete sequence of Escherichia coli C str. ATCC 8739.</title>
        <authorList>
            <person name="Copeland A."/>
            <person name="Lucas S."/>
            <person name="Lapidus A."/>
            <person name="Glavina del Rio T."/>
            <person name="Dalin E."/>
            <person name="Tice H."/>
            <person name="Bruce D."/>
            <person name="Goodwin L."/>
            <person name="Pitluck S."/>
            <person name="Kiss H."/>
            <person name="Brettin T."/>
            <person name="Detter J.C."/>
            <person name="Han C."/>
            <person name="Kuske C.R."/>
            <person name="Schmutz J."/>
            <person name="Larimer F."/>
            <person name="Land M."/>
            <person name="Hauser L."/>
            <person name="Kyrpides N."/>
            <person name="Mikhailova N."/>
            <person name="Ingram L."/>
            <person name="Richardson P."/>
        </authorList>
    </citation>
    <scope>NUCLEOTIDE SEQUENCE [LARGE SCALE GENOMIC DNA]</scope>
    <source>
        <strain>ATCC 8739 / DSM 1576 / NBRC 3972 / NCIMB 8545 / WDCM 00012 / Crooks</strain>
    </source>
</reference>
<organism>
    <name type="scientific">Escherichia coli (strain ATCC 8739 / DSM 1576 / NBRC 3972 / NCIMB 8545 / WDCM 00012 / Crooks)</name>
    <dbReference type="NCBI Taxonomy" id="481805"/>
    <lineage>
        <taxon>Bacteria</taxon>
        <taxon>Pseudomonadati</taxon>
        <taxon>Pseudomonadota</taxon>
        <taxon>Gammaproteobacteria</taxon>
        <taxon>Enterobacterales</taxon>
        <taxon>Enterobacteriaceae</taxon>
        <taxon>Escherichia</taxon>
    </lineage>
</organism>
<protein>
    <recommendedName>
        <fullName evidence="1">Lipoprotein signal peptidase</fullName>
        <ecNumber evidence="1">3.4.23.36</ecNumber>
    </recommendedName>
    <alternativeName>
        <fullName evidence="1">Prolipoprotein signal peptidase</fullName>
    </alternativeName>
    <alternativeName>
        <fullName evidence="1">Signal peptidase II</fullName>
        <shortName evidence="1">SPase II</shortName>
    </alternativeName>
</protein>
<name>LSPA_ECOLC</name>